<protein>
    <recommendedName>
        <fullName>Probable cell wall amidase LytH</fullName>
        <ecNumber>3.5.1.-</ecNumber>
    </recommendedName>
</protein>
<proteinExistence type="inferred from homology"/>
<dbReference type="EC" id="3.5.1.-"/>
<dbReference type="EMBL" id="AP008934">
    <property type="protein sequence ID" value="BAE18272.1"/>
    <property type="molecule type" value="Genomic_DNA"/>
</dbReference>
<dbReference type="RefSeq" id="WP_011302955.1">
    <property type="nucleotide sequence ID" value="NZ_MTGA01000038.1"/>
</dbReference>
<dbReference type="SMR" id="Q49Y70"/>
<dbReference type="GeneID" id="3617011"/>
<dbReference type="KEGG" id="ssp:SSP1127"/>
<dbReference type="PATRIC" id="fig|342451.11.peg.1127"/>
<dbReference type="eggNOG" id="COG0860">
    <property type="taxonomic scope" value="Bacteria"/>
</dbReference>
<dbReference type="HOGENOM" id="CLU_014322_1_1_9"/>
<dbReference type="OrthoDB" id="9806267at2"/>
<dbReference type="Proteomes" id="UP000006371">
    <property type="component" value="Chromosome"/>
</dbReference>
<dbReference type="GO" id="GO:0005576">
    <property type="term" value="C:extracellular region"/>
    <property type="evidence" value="ECO:0007669"/>
    <property type="project" value="UniProtKB-SubCell"/>
</dbReference>
<dbReference type="GO" id="GO:0030288">
    <property type="term" value="C:outer membrane-bounded periplasmic space"/>
    <property type="evidence" value="ECO:0007669"/>
    <property type="project" value="TreeGrafter"/>
</dbReference>
<dbReference type="GO" id="GO:0008745">
    <property type="term" value="F:N-acetylmuramoyl-L-alanine amidase activity"/>
    <property type="evidence" value="ECO:0007669"/>
    <property type="project" value="InterPro"/>
</dbReference>
<dbReference type="GO" id="GO:0071555">
    <property type="term" value="P:cell wall organization"/>
    <property type="evidence" value="ECO:0007669"/>
    <property type="project" value="UniProtKB-KW"/>
</dbReference>
<dbReference type="GO" id="GO:0009253">
    <property type="term" value="P:peptidoglycan catabolic process"/>
    <property type="evidence" value="ECO:0007669"/>
    <property type="project" value="InterPro"/>
</dbReference>
<dbReference type="CDD" id="cd02696">
    <property type="entry name" value="MurNAc-LAA"/>
    <property type="match status" value="1"/>
</dbReference>
<dbReference type="Gene3D" id="2.30.30.40">
    <property type="entry name" value="SH3 Domains"/>
    <property type="match status" value="1"/>
</dbReference>
<dbReference type="Gene3D" id="3.40.630.40">
    <property type="entry name" value="Zn-dependent exopeptidases"/>
    <property type="match status" value="1"/>
</dbReference>
<dbReference type="InterPro" id="IPR017273">
    <property type="entry name" value="LytH"/>
</dbReference>
<dbReference type="InterPro" id="IPR002508">
    <property type="entry name" value="MurNAc-LAA_cat"/>
</dbReference>
<dbReference type="InterPro" id="IPR050695">
    <property type="entry name" value="N-acetylmuramoyl_amidase_3"/>
</dbReference>
<dbReference type="InterPro" id="IPR003646">
    <property type="entry name" value="SH3-like_bac-type"/>
</dbReference>
<dbReference type="PANTHER" id="PTHR30404:SF7">
    <property type="entry name" value="CELL WALL AMIDASE LYTH-RELATED"/>
    <property type="match status" value="1"/>
</dbReference>
<dbReference type="PANTHER" id="PTHR30404">
    <property type="entry name" value="N-ACETYLMURAMOYL-L-ALANINE AMIDASE"/>
    <property type="match status" value="1"/>
</dbReference>
<dbReference type="Pfam" id="PF01520">
    <property type="entry name" value="Amidase_3"/>
    <property type="match status" value="1"/>
</dbReference>
<dbReference type="Pfam" id="PF08239">
    <property type="entry name" value="SH3_3"/>
    <property type="match status" value="1"/>
</dbReference>
<dbReference type="PIRSF" id="PIRSF037730">
    <property type="entry name" value="CWA_LytH_prd"/>
    <property type="match status" value="1"/>
</dbReference>
<dbReference type="SMART" id="SM00646">
    <property type="entry name" value="Ami_3"/>
    <property type="match status" value="1"/>
</dbReference>
<dbReference type="SMART" id="SM00287">
    <property type="entry name" value="SH3b"/>
    <property type="match status" value="1"/>
</dbReference>
<dbReference type="SUPFAM" id="SSF53187">
    <property type="entry name" value="Zn-dependent exopeptidases"/>
    <property type="match status" value="1"/>
</dbReference>
<dbReference type="PROSITE" id="PS51781">
    <property type="entry name" value="SH3B"/>
    <property type="match status" value="1"/>
</dbReference>
<keyword id="KW-0961">Cell wall biogenesis/degradation</keyword>
<keyword id="KW-0378">Hydrolase</keyword>
<keyword id="KW-1185">Reference proteome</keyword>
<keyword id="KW-0964">Secreted</keyword>
<keyword id="KW-0732">Signal</keyword>
<organism>
    <name type="scientific">Staphylococcus saprophyticus subsp. saprophyticus (strain ATCC 15305 / DSM 20229 / NCIMB 8711 / NCTC 7292 / S-41)</name>
    <dbReference type="NCBI Taxonomy" id="342451"/>
    <lineage>
        <taxon>Bacteria</taxon>
        <taxon>Bacillati</taxon>
        <taxon>Bacillota</taxon>
        <taxon>Bacilli</taxon>
        <taxon>Bacillales</taxon>
        <taxon>Staphylococcaceae</taxon>
        <taxon>Staphylococcus</taxon>
    </lineage>
</organism>
<accession>Q49Y70</accession>
<reference key="1">
    <citation type="journal article" date="2005" name="Proc. Natl. Acad. Sci. U.S.A.">
        <title>Whole genome sequence of Staphylococcus saprophyticus reveals the pathogenesis of uncomplicated urinary tract infection.</title>
        <authorList>
            <person name="Kuroda M."/>
            <person name="Yamashita A."/>
            <person name="Hirakawa H."/>
            <person name="Kumano M."/>
            <person name="Morikawa K."/>
            <person name="Higashide M."/>
            <person name="Maruyama A."/>
            <person name="Inose Y."/>
            <person name="Matoba K."/>
            <person name="Toh H."/>
            <person name="Kuhara S."/>
            <person name="Hattori M."/>
            <person name="Ohta T."/>
        </authorList>
    </citation>
    <scope>NUCLEOTIDE SEQUENCE [LARGE SCALE GENOMIC DNA]</scope>
    <source>
        <strain>ATCC 15305 / DSM 20229 / NCIMB 8711 / NCTC 7292 / S-41</strain>
    </source>
</reference>
<evidence type="ECO:0000250" key="1"/>
<evidence type="ECO:0000255" key="2"/>
<evidence type="ECO:0000255" key="3">
    <source>
        <dbReference type="PROSITE-ProRule" id="PRU01117"/>
    </source>
</evidence>
<evidence type="ECO:0000256" key="4">
    <source>
        <dbReference type="SAM" id="MobiDB-lite"/>
    </source>
</evidence>
<evidence type="ECO:0000305" key="5"/>
<feature type="signal peptide" evidence="2">
    <location>
        <begin position="1"/>
        <end position="40"/>
    </location>
</feature>
<feature type="chain" id="PRO_0000226289" description="Probable cell wall amidase LytH">
    <location>
        <begin position="41"/>
        <end position="291"/>
    </location>
</feature>
<feature type="domain" description="SH3b" evidence="3">
    <location>
        <begin position="41"/>
        <end position="105"/>
    </location>
</feature>
<feature type="domain" description="MurNAc-LAA" evidence="2">
    <location>
        <begin position="122"/>
        <end position="286"/>
    </location>
</feature>
<feature type="region of interest" description="Disordered" evidence="4">
    <location>
        <begin position="109"/>
        <end position="146"/>
    </location>
</feature>
<name>LYTH_STAS1</name>
<comment type="function">
    <text evidence="1">Probably involved in cell-wall metabolism.</text>
</comment>
<comment type="subcellular location">
    <subcellularLocation>
        <location evidence="5">Secreted</location>
    </subcellularLocation>
</comment>
<comment type="similarity">
    <text evidence="5">Belongs to the N-acetylmuramoyl-L-alanine amidase 3 family.</text>
</comment>
<sequence length="291" mass="32627">MKKFNDWLEKHNLRNIPTLIVVVAFVLFVFMTIAFLNHNDEDSSTIYITEDAELRTGPSAAYPEIHSIDKGQNFHKIGKTGKWIEVVSSNNKEKGWVAGWHTNLNIQADKNPNAKPLKDKTIVLDPGHGGSDQGASSNTHKKSKEKVYTLKTAKELKALLEKEGATVSMTRESDTYVTLDDRNIKGDAYISIHNDSLKSSKANGSTVYWFKDNQKALAETLSASLQKKALLTNKGARQENFQVLRQTNVPAVLLELGYISNPTDEDMITEKLHRHIVEQAIVEGLRAYFSE</sequence>
<gene>
    <name type="primary">lytH</name>
    <name type="ordered locus">SSP1127</name>
</gene>